<sequence length="501" mass="56593">MEVMQLSFSYPALFLFVFFLFMLVKQLRRPKNLPPGPNKLPIIGNLHQLATELPHHTLKQLADKYGPIMHLQFGEVSAIIVSSAKLAKVFLGNHGLAVADRPKTMVATIMLYNSSGVTFAPYGDYWKHLRQVYAVELLSPKSVRSFSMIMDEEISLMLKRIQSNAAGQPLKVHDEMMTYLFATLCRTSIGSVCKGRDLLIDTAKDISAISAAIRIEELFPSLKILPYITGLHRQLGKLSKRLDGILEDIIAQREKMQESSTGDNDERDILGVLLKLKRSNSNDTKVRIRNDDIKAIVFELILAGTLSTAATVEWCLSELKKNPGAMKKAQDEVRQVMKGETICTNDVQKLEYIRMVIKETFRMHPPAPLLFPRECREPIQVEGYTIPEKSWLIVNYWAVGRDPELWNDPEKFEPERFRNSPVDMSGNHYELIPFGAGRRICPGISFAATNAELLLASLIYHFDWKLPAGVKELDMDELFGAGCVRKNPLHLIPKTVVPCQD</sequence>
<evidence type="ECO:0000250" key="1">
    <source>
        <dbReference type="UniProtKB" id="P0DO13"/>
    </source>
</evidence>
<evidence type="ECO:0000250" key="2">
    <source>
        <dbReference type="UniProtKB" id="Q96242"/>
    </source>
</evidence>
<evidence type="ECO:0000255" key="3"/>
<evidence type="ECO:0000269" key="4">
    <source>
    </source>
</evidence>
<evidence type="ECO:0000269" key="5">
    <source>
    </source>
</evidence>
<evidence type="ECO:0000303" key="6">
    <source>
    </source>
</evidence>
<evidence type="ECO:0000303" key="7">
    <source>
    </source>
</evidence>
<evidence type="ECO:0000305" key="8"/>
<dbReference type="EC" id="1.14.19.81" evidence="4"/>
<dbReference type="EMBL" id="MF537712">
    <property type="status" value="NOT_ANNOTATED_CDS"/>
    <property type="molecule type" value="mRNA"/>
</dbReference>
<dbReference type="SMR" id="P0DO14"/>
<dbReference type="SABIO-RK" id="P0DO14"/>
<dbReference type="UniPathway" id="UPA00310"/>
<dbReference type="GO" id="GO:0005789">
    <property type="term" value="C:endoplasmic reticulum membrane"/>
    <property type="evidence" value="ECO:0007669"/>
    <property type="project" value="UniProtKB-SubCell"/>
</dbReference>
<dbReference type="GO" id="GO:0020037">
    <property type="term" value="F:heme binding"/>
    <property type="evidence" value="ECO:0007669"/>
    <property type="project" value="InterPro"/>
</dbReference>
<dbReference type="GO" id="GO:0005506">
    <property type="term" value="F:iron ion binding"/>
    <property type="evidence" value="ECO:0007669"/>
    <property type="project" value="InterPro"/>
</dbReference>
<dbReference type="GO" id="GO:0004497">
    <property type="term" value="F:monooxygenase activity"/>
    <property type="evidence" value="ECO:0007669"/>
    <property type="project" value="UniProtKB-KW"/>
</dbReference>
<dbReference type="GO" id="GO:0016705">
    <property type="term" value="F:oxidoreductase activity, acting on paired donors, with incorporation or reduction of molecular oxygen"/>
    <property type="evidence" value="ECO:0007669"/>
    <property type="project" value="InterPro"/>
</dbReference>
<dbReference type="GO" id="GO:0009821">
    <property type="term" value="P:alkaloid biosynthetic process"/>
    <property type="evidence" value="ECO:0007669"/>
    <property type="project" value="UniProtKB-ARBA"/>
</dbReference>
<dbReference type="CDD" id="cd11072">
    <property type="entry name" value="CYP71-like"/>
    <property type="match status" value="1"/>
</dbReference>
<dbReference type="FunFam" id="1.10.630.10:FF:000097">
    <property type="entry name" value="Cytochrome P-450 19"/>
    <property type="match status" value="1"/>
</dbReference>
<dbReference type="Gene3D" id="1.10.630.10">
    <property type="entry name" value="Cytochrome P450"/>
    <property type="match status" value="1"/>
</dbReference>
<dbReference type="InterPro" id="IPR001128">
    <property type="entry name" value="Cyt_P450"/>
</dbReference>
<dbReference type="InterPro" id="IPR017972">
    <property type="entry name" value="Cyt_P450_CS"/>
</dbReference>
<dbReference type="InterPro" id="IPR002401">
    <property type="entry name" value="Cyt_P450_E_grp-I"/>
</dbReference>
<dbReference type="InterPro" id="IPR036396">
    <property type="entry name" value="Cyt_P450_sf"/>
</dbReference>
<dbReference type="PANTHER" id="PTHR47955:SF13">
    <property type="entry name" value="CYTOCHROME P450"/>
    <property type="match status" value="1"/>
</dbReference>
<dbReference type="PANTHER" id="PTHR47955">
    <property type="entry name" value="CYTOCHROME P450 FAMILY 71 PROTEIN"/>
    <property type="match status" value="1"/>
</dbReference>
<dbReference type="Pfam" id="PF00067">
    <property type="entry name" value="p450"/>
    <property type="match status" value="1"/>
</dbReference>
<dbReference type="PRINTS" id="PR00463">
    <property type="entry name" value="EP450I"/>
</dbReference>
<dbReference type="PRINTS" id="PR00385">
    <property type="entry name" value="P450"/>
</dbReference>
<dbReference type="SUPFAM" id="SSF48264">
    <property type="entry name" value="Cytochrome P450"/>
    <property type="match status" value="1"/>
</dbReference>
<dbReference type="PROSITE" id="PS00086">
    <property type="entry name" value="CYTOCHROME_P450"/>
    <property type="match status" value="1"/>
</dbReference>
<organism>
    <name type="scientific">Gelsemium sempervirens</name>
    <name type="common">Carolina jasmine</name>
    <name type="synonym">Bignonia sempervirens</name>
    <dbReference type="NCBI Taxonomy" id="28542"/>
    <lineage>
        <taxon>Eukaryota</taxon>
        <taxon>Viridiplantae</taxon>
        <taxon>Streptophyta</taxon>
        <taxon>Embryophyta</taxon>
        <taxon>Tracheophyta</taxon>
        <taxon>Spermatophyta</taxon>
        <taxon>Magnoliopsida</taxon>
        <taxon>eudicotyledons</taxon>
        <taxon>Gunneridae</taxon>
        <taxon>Pentapetalae</taxon>
        <taxon>asterids</taxon>
        <taxon>lamiids</taxon>
        <taxon>Gentianales</taxon>
        <taxon>Gelsemiaceae</taxon>
        <taxon>Gelsemium</taxon>
    </lineage>
</organism>
<comment type="function">
    <text evidence="4 5">Monooxygenase involved in the biosynthesis of ajmaline-type monoterpenoid indole alkaloids (MIAs) natural products, important plant-derived pharmaceuticals used in the therapy of heart disorders (PubMed:29942076, PubMed:38212296). Converts by cyclization the strictosidine-derived geissoschizine to the sarpagan alkaloid polyneuridine aldehyde, precursor of vomilenine, an intermediate chemical in the biosynthesis of ajmaline (PubMed:29942076). Converts by aromatization the tetrahydro-beta-carboline alkaloids tetrahydroalstonine and ajmalicine to the corresponding beta-carboline alkaloids alstonine and serpentine, respectively (PubMed:29942076).</text>
</comment>
<comment type="catalytic activity">
    <reaction evidence="4">
        <text>(19E)-geissoschizine + reduced [NADPH--hemoprotein reductase] + O2 = polyneuridine aldehyde + oxidized [NADPH--hemoprotein reductase] + 2 H2O + H(+)</text>
        <dbReference type="Rhea" id="RHEA:58124"/>
        <dbReference type="Rhea" id="RHEA-COMP:11964"/>
        <dbReference type="Rhea" id="RHEA-COMP:11965"/>
        <dbReference type="ChEBI" id="CHEBI:15377"/>
        <dbReference type="ChEBI" id="CHEBI:15378"/>
        <dbReference type="ChEBI" id="CHEBI:15379"/>
        <dbReference type="ChEBI" id="CHEBI:16829"/>
        <dbReference type="ChEBI" id="CHEBI:17037"/>
        <dbReference type="ChEBI" id="CHEBI:57618"/>
        <dbReference type="ChEBI" id="CHEBI:58210"/>
        <dbReference type="EC" id="1.14.19.81"/>
    </reaction>
    <physiologicalReaction direction="left-to-right" evidence="4">
        <dbReference type="Rhea" id="RHEA:58125"/>
    </physiologicalReaction>
</comment>
<comment type="catalytic activity">
    <reaction evidence="4">
        <text>tetrahydroalstonine + A + reduced [NADPH--hemoprotein reductase] + O2 = alstonine + AH2 + oxidized [NADPH--hemoprotein reductase] + 2 H2O + H(+)</text>
        <dbReference type="Rhea" id="RHEA:58128"/>
        <dbReference type="Rhea" id="RHEA-COMP:11964"/>
        <dbReference type="Rhea" id="RHEA-COMP:11965"/>
        <dbReference type="ChEBI" id="CHEBI:13193"/>
        <dbReference type="ChEBI" id="CHEBI:15377"/>
        <dbReference type="ChEBI" id="CHEBI:15378"/>
        <dbReference type="ChEBI" id="CHEBI:15379"/>
        <dbReference type="ChEBI" id="CHEBI:17499"/>
        <dbReference type="ChEBI" id="CHEBI:57618"/>
        <dbReference type="ChEBI" id="CHEBI:58210"/>
        <dbReference type="ChEBI" id="CHEBI:142526"/>
        <dbReference type="ChEBI" id="CHEBI:142530"/>
    </reaction>
    <physiologicalReaction direction="left-to-right" evidence="4">
        <dbReference type="Rhea" id="RHEA:58129"/>
    </physiologicalReaction>
</comment>
<comment type="catalytic activity">
    <reaction evidence="4">
        <text>ajmalicine + A + reduced [NADPH--hemoprotein reductase] + O2 = serpentine + AH2 + oxidized [NADPH--hemoprotein reductase] + 2 H2O + H(+)</text>
        <dbReference type="Rhea" id="RHEA:58132"/>
        <dbReference type="Rhea" id="RHEA-COMP:11964"/>
        <dbReference type="Rhea" id="RHEA-COMP:11965"/>
        <dbReference type="ChEBI" id="CHEBI:13193"/>
        <dbReference type="ChEBI" id="CHEBI:15377"/>
        <dbReference type="ChEBI" id="CHEBI:15378"/>
        <dbReference type="ChEBI" id="CHEBI:15379"/>
        <dbReference type="ChEBI" id="CHEBI:17499"/>
        <dbReference type="ChEBI" id="CHEBI:57618"/>
        <dbReference type="ChEBI" id="CHEBI:58210"/>
        <dbReference type="ChEBI" id="CHEBI:142527"/>
        <dbReference type="ChEBI" id="CHEBI:142531"/>
    </reaction>
    <physiologicalReaction direction="left-to-right" evidence="4">
        <dbReference type="Rhea" id="RHEA:58133"/>
    </physiologicalReaction>
</comment>
<comment type="cofactor">
    <cofactor evidence="2">
        <name>heme</name>
        <dbReference type="ChEBI" id="CHEBI:30413"/>
    </cofactor>
</comment>
<comment type="biophysicochemical properties">
    <kinetics>
        <KM evidence="4">35.3 uM for geissoschizine</KM>
    </kinetics>
</comment>
<comment type="pathway">
    <text evidence="4 5">Alkaloid biosynthesis; ajmaline biosynthesis.</text>
</comment>
<comment type="subcellular location">
    <subcellularLocation>
        <location evidence="1">Endoplasmic reticulum membrane</location>
        <topology evidence="3">Single-pass type II membrane protein</topology>
    </subcellularLocation>
</comment>
<comment type="tissue specificity">
    <text evidence="4">Highly expressed in roots (PubMed:29942076). Expressed at low levels in stems (PubMed:29942076).</text>
</comment>
<comment type="biotechnology">
    <text evidence="5">The strictosidine aglycone-producing AJM7-DeltaHYS yeast strain expressing pathway genes of the VOM module, RsGS, SBE (GsSBE, RsSBE1 or RsSBE2), RsPNAE, RsVS and RsVH, accumulates vomilenine (PubMed:38212296). Additionnal expression of pathway genes of the AJM module, RsVR, RsDHVR, AAE (RsAAE1 or RsAAE2) and RsNNMT, leads to the production of ajmaline (PubMed:38212296). Ajmaline is an anti-arrhythmic alkaloid commercially used as an efficient drug for the treatment of arrhythmic heart disorder (PubMed:38212296).</text>
</comment>
<comment type="similarity">
    <text evidence="8">Belongs to the cytochrome P450 family.</text>
</comment>
<protein>
    <recommendedName>
        <fullName evidence="6 7">Sarpagan bridge enzyme</fullName>
        <shortName evidence="6 7">GsSBE</shortName>
        <ecNumber evidence="4">1.14.19.81</ecNumber>
    </recommendedName>
    <alternativeName>
        <fullName evidence="6">Cytochrome P450 71AY5</fullName>
    </alternativeName>
    <alternativeName>
        <fullName>Polyneuridine aldehyde synthase</fullName>
    </alternativeName>
</protein>
<reference key="1">
    <citation type="journal article" date="2018" name="Nat. Chem. Biol.">
        <title>Sarpagan bridge enzyme has substrate-controlled cyclization and aromatization modes.</title>
        <authorList>
            <person name="Dang T.T."/>
            <person name="Franke J."/>
            <person name="Carqueijeiro I.S.T."/>
            <person name="Langley C."/>
            <person name="Courdavault V."/>
            <person name="O'Connor S.E."/>
        </authorList>
    </citation>
    <scope>NUCLEOTIDE SEQUENCE [MRNA]</scope>
    <scope>FUNCTION</scope>
    <scope>CATALYTIC ACTIVITY</scope>
    <scope>BIOPHYSICOCHEMICAL PROPERTIES</scope>
    <scope>PATHWAY</scope>
</reference>
<reference key="2">
    <citation type="journal article" date="2024" name="Nat. Commun.">
        <title>De novo biosynthesis of antiarrhythmic alkaloid ajmaline.</title>
        <authorList>
            <person name="Guo J."/>
            <person name="Gao D."/>
            <person name="Lian J."/>
            <person name="Qu Y."/>
        </authorList>
    </citation>
    <scope>FUNCTION</scope>
    <scope>PATHWAY</scope>
    <scope>BIOTECHNOLOGY</scope>
</reference>
<accession>P0DO14</accession>
<gene>
    <name evidence="7" type="primary">SBE</name>
    <name evidence="6" type="synonym">CYP71AY5</name>
</gene>
<keyword id="KW-0256">Endoplasmic reticulum</keyword>
<keyword id="KW-0349">Heme</keyword>
<keyword id="KW-0408">Iron</keyword>
<keyword id="KW-0472">Membrane</keyword>
<keyword id="KW-0479">Metal-binding</keyword>
<keyword id="KW-0503">Monooxygenase</keyword>
<keyword id="KW-0560">Oxidoreductase</keyword>
<keyword id="KW-0735">Signal-anchor</keyword>
<keyword id="KW-0812">Transmembrane</keyword>
<keyword id="KW-1133">Transmembrane helix</keyword>
<name>SBE_GELSE</name>
<proteinExistence type="evidence at protein level"/>
<feature type="chain" id="PRO_0000446227" description="Sarpagan bridge enzyme">
    <location>
        <begin position="1"/>
        <end position="501"/>
    </location>
</feature>
<feature type="transmembrane region" description="Helical; Signal-anchor for type II membrane protein" evidence="3">
    <location>
        <begin position="3"/>
        <end position="23"/>
    </location>
</feature>
<feature type="binding site" description="axial binding residue" evidence="2">
    <location>
        <position position="441"/>
    </location>
    <ligand>
        <name>heme</name>
        <dbReference type="ChEBI" id="CHEBI:30413"/>
    </ligand>
    <ligandPart>
        <name>Fe</name>
        <dbReference type="ChEBI" id="CHEBI:18248"/>
    </ligandPart>
</feature>